<reference key="1">
    <citation type="journal article" date="2004" name="Nature">
        <title>Genome sequence of the Brown Norway rat yields insights into mammalian evolution.</title>
        <authorList>
            <person name="Gibbs R.A."/>
            <person name="Weinstock G.M."/>
            <person name="Metzker M.L."/>
            <person name="Muzny D.M."/>
            <person name="Sodergren E.J."/>
            <person name="Scherer S."/>
            <person name="Scott G."/>
            <person name="Steffen D."/>
            <person name="Worley K.C."/>
            <person name="Burch P.E."/>
            <person name="Okwuonu G."/>
            <person name="Hines S."/>
            <person name="Lewis L."/>
            <person name="Deramo C."/>
            <person name="Delgado O."/>
            <person name="Dugan-Rocha S."/>
            <person name="Miner G."/>
            <person name="Morgan M."/>
            <person name="Hawes A."/>
            <person name="Gill R."/>
            <person name="Holt R.A."/>
            <person name="Adams M.D."/>
            <person name="Amanatides P.G."/>
            <person name="Baden-Tillson H."/>
            <person name="Barnstead M."/>
            <person name="Chin S."/>
            <person name="Evans C.A."/>
            <person name="Ferriera S."/>
            <person name="Fosler C."/>
            <person name="Glodek A."/>
            <person name="Gu Z."/>
            <person name="Jennings D."/>
            <person name="Kraft C.L."/>
            <person name="Nguyen T."/>
            <person name="Pfannkoch C.M."/>
            <person name="Sitter C."/>
            <person name="Sutton G.G."/>
            <person name="Venter J.C."/>
            <person name="Woodage T."/>
            <person name="Smith D."/>
            <person name="Lee H.-M."/>
            <person name="Gustafson E."/>
            <person name="Cahill P."/>
            <person name="Kana A."/>
            <person name="Doucette-Stamm L."/>
            <person name="Weinstock K."/>
            <person name="Fechtel K."/>
            <person name="Weiss R.B."/>
            <person name="Dunn D.M."/>
            <person name="Green E.D."/>
            <person name="Blakesley R.W."/>
            <person name="Bouffard G.G."/>
            <person name="De Jong P.J."/>
            <person name="Osoegawa K."/>
            <person name="Zhu B."/>
            <person name="Marra M."/>
            <person name="Schein J."/>
            <person name="Bosdet I."/>
            <person name="Fjell C."/>
            <person name="Jones S."/>
            <person name="Krzywinski M."/>
            <person name="Mathewson C."/>
            <person name="Siddiqui A."/>
            <person name="Wye N."/>
            <person name="McPherson J."/>
            <person name="Zhao S."/>
            <person name="Fraser C.M."/>
            <person name="Shetty J."/>
            <person name="Shatsman S."/>
            <person name="Geer K."/>
            <person name="Chen Y."/>
            <person name="Abramzon S."/>
            <person name="Nierman W.C."/>
            <person name="Havlak P.H."/>
            <person name="Chen R."/>
            <person name="Durbin K.J."/>
            <person name="Egan A."/>
            <person name="Ren Y."/>
            <person name="Song X.-Z."/>
            <person name="Li B."/>
            <person name="Liu Y."/>
            <person name="Qin X."/>
            <person name="Cawley S."/>
            <person name="Cooney A.J."/>
            <person name="D'Souza L.M."/>
            <person name="Martin K."/>
            <person name="Wu J.Q."/>
            <person name="Gonzalez-Garay M.L."/>
            <person name="Jackson A.R."/>
            <person name="Kalafus K.J."/>
            <person name="McLeod M.P."/>
            <person name="Milosavljevic A."/>
            <person name="Virk D."/>
            <person name="Volkov A."/>
            <person name="Wheeler D.A."/>
            <person name="Zhang Z."/>
            <person name="Bailey J.A."/>
            <person name="Eichler E.E."/>
            <person name="Tuzun E."/>
            <person name="Birney E."/>
            <person name="Mongin E."/>
            <person name="Ureta-Vidal A."/>
            <person name="Woodwark C."/>
            <person name="Zdobnov E."/>
            <person name="Bork P."/>
            <person name="Suyama M."/>
            <person name="Torrents D."/>
            <person name="Alexandersson M."/>
            <person name="Trask B.J."/>
            <person name="Young J.M."/>
            <person name="Huang H."/>
            <person name="Wang H."/>
            <person name="Xing H."/>
            <person name="Daniels S."/>
            <person name="Gietzen D."/>
            <person name="Schmidt J."/>
            <person name="Stevens K."/>
            <person name="Vitt U."/>
            <person name="Wingrove J."/>
            <person name="Camara F."/>
            <person name="Mar Alba M."/>
            <person name="Abril J.F."/>
            <person name="Guigo R."/>
            <person name="Smit A."/>
            <person name="Dubchak I."/>
            <person name="Rubin E.M."/>
            <person name="Couronne O."/>
            <person name="Poliakov A."/>
            <person name="Huebner N."/>
            <person name="Ganten D."/>
            <person name="Goesele C."/>
            <person name="Hummel O."/>
            <person name="Kreitler T."/>
            <person name="Lee Y.-A."/>
            <person name="Monti J."/>
            <person name="Schulz H."/>
            <person name="Zimdahl H."/>
            <person name="Himmelbauer H."/>
            <person name="Lehrach H."/>
            <person name="Jacob H.J."/>
            <person name="Bromberg S."/>
            <person name="Gullings-Handley J."/>
            <person name="Jensen-Seaman M.I."/>
            <person name="Kwitek A.E."/>
            <person name="Lazar J."/>
            <person name="Pasko D."/>
            <person name="Tonellato P.J."/>
            <person name="Twigger S."/>
            <person name="Ponting C.P."/>
            <person name="Duarte J.M."/>
            <person name="Rice S."/>
            <person name="Goodstadt L."/>
            <person name="Beatson S.A."/>
            <person name="Emes R.D."/>
            <person name="Winter E.E."/>
            <person name="Webber C."/>
            <person name="Brandt P."/>
            <person name="Nyakatura G."/>
            <person name="Adetobi M."/>
            <person name="Chiaromonte F."/>
            <person name="Elnitski L."/>
            <person name="Eswara P."/>
            <person name="Hardison R.C."/>
            <person name="Hou M."/>
            <person name="Kolbe D."/>
            <person name="Makova K."/>
            <person name="Miller W."/>
            <person name="Nekrutenko A."/>
            <person name="Riemer C."/>
            <person name="Schwartz S."/>
            <person name="Taylor J."/>
            <person name="Yang S."/>
            <person name="Zhang Y."/>
            <person name="Lindpaintner K."/>
            <person name="Andrews T.D."/>
            <person name="Caccamo M."/>
            <person name="Clamp M."/>
            <person name="Clarke L."/>
            <person name="Curwen V."/>
            <person name="Durbin R.M."/>
            <person name="Eyras E."/>
            <person name="Searle S.M."/>
            <person name="Cooper G.M."/>
            <person name="Batzoglou S."/>
            <person name="Brudno M."/>
            <person name="Sidow A."/>
            <person name="Stone E.A."/>
            <person name="Payseur B.A."/>
            <person name="Bourque G."/>
            <person name="Lopez-Otin C."/>
            <person name="Puente X.S."/>
            <person name="Chakrabarti K."/>
            <person name="Chatterji S."/>
            <person name="Dewey C."/>
            <person name="Pachter L."/>
            <person name="Bray N."/>
            <person name="Yap V.B."/>
            <person name="Caspi A."/>
            <person name="Tesler G."/>
            <person name="Pevzner P.A."/>
            <person name="Haussler D."/>
            <person name="Roskin K.M."/>
            <person name="Baertsch R."/>
            <person name="Clawson H."/>
            <person name="Furey T.S."/>
            <person name="Hinrichs A.S."/>
            <person name="Karolchik D."/>
            <person name="Kent W.J."/>
            <person name="Rosenbloom K.R."/>
            <person name="Trumbower H."/>
            <person name="Weirauch M."/>
            <person name="Cooper D.N."/>
            <person name="Stenson P.D."/>
            <person name="Ma B."/>
            <person name="Brent M."/>
            <person name="Arumugam M."/>
            <person name="Shteynberg D."/>
            <person name="Copley R.R."/>
            <person name="Taylor M.S."/>
            <person name="Riethman H."/>
            <person name="Mudunuri U."/>
            <person name="Peterson J."/>
            <person name="Guyer M."/>
            <person name="Felsenfeld A."/>
            <person name="Old S."/>
            <person name="Mockrin S."/>
            <person name="Collins F.S."/>
        </authorList>
    </citation>
    <scope>NUCLEOTIDE SEQUENCE [LARGE SCALE GENOMIC DNA]</scope>
    <source>
        <strain>Brown Norway</strain>
    </source>
</reference>
<reference key="2">
    <citation type="journal article" date="1995" name="J. Biol. Chem.">
        <title>Alternative exon splicing within the amino-terminal nontriple-helical domain of the rat pro-alpha 1(XI) collagen chain generates multiple forms of the mRNA transcript which exhibit tissue-dependent variation.</title>
        <authorList>
            <person name="Oxford J.T."/>
            <person name="Doege K.J."/>
            <person name="Morris N.P."/>
        </authorList>
    </citation>
    <scope>NUCLEOTIDE SEQUENCE [MRNA] OF 1-556 (ISOFORM 2)</scope>
    <scope>PARTIAL NUCLEOTIDE SEQUENCE [GENOMIC DNA]</scope>
    <scope>ALTERNATIVE SPLICING (ISOFORMS 1; 2; 3; 4; 5 AND 6)</scope>
    <source>
        <strain>Sprague-Dawley</strain>
        <tissue>Chondrosarcoma</tissue>
    </source>
</reference>
<reference key="3">
    <citation type="journal article" date="1988" name="J. Biol. Chem.">
        <title>Cloning and sequencing of pro-alpha 1 (XI) collagen cDNA demonstrates that type XI belongs to the fibrillar class of collagens and reveals that the expression of the gene is not restricted to cartilagenous tissue.</title>
        <authorList>
            <person name="Bernard M."/>
            <person name="Yoshioka H."/>
            <person name="Rodriguez E."/>
            <person name="van der Rest M."/>
            <person name="Kimura T."/>
            <person name="Ninomiya Y."/>
            <person name="Olsen B.R."/>
            <person name="Ramirez F."/>
        </authorList>
    </citation>
    <scope>NUCLEOTIDE SEQUENCE [MRNA] OF 1323-1804</scope>
</reference>
<reference key="4">
    <citation type="journal article" date="2000" name="J. Biol. Chem.">
        <title>Structural organization of distinct domains within the non-collagenous N-terminal region of collagen type XI.</title>
        <authorList>
            <person name="Gregory K.E."/>
            <person name="Oxford J.T."/>
            <person name="Chen Y."/>
            <person name="Gambee J.E."/>
            <person name="Gygi S.P."/>
            <person name="Aebersold R."/>
            <person name="Neame P.J."/>
            <person name="Mechling D.E."/>
            <person name="Bachinger H.P."/>
            <person name="Morris N.P."/>
        </authorList>
    </citation>
    <scope>DISULFIDE BONDS</scope>
    <scope>GLYCOSYLATION</scope>
</reference>
<sequence length="1804" mass="181027">MEPWSRWKTKRWIWDLTISTLVLTFLFQAREVRGAAPVDILKALDFHNSPVGISKTTGFCTSRKNSKDPDIAYRVTEEAQISAPTKQLFPGGIFPQDFSILFTIKPKKGTQAFLLSLYNEHGIQQLGVEVGRSPVFLFEDHTGKPTPENYPLFSTVNIADGKWHRVAISVEKKTVTMIVDCKKKITKPLDRSERSIVDTNGIMVFGTRILETDVFQGDIQQFLITGDPKAAYDYCDHYSPDCDLTSKAAQAQEPHIDEYAPEDIIEYDYEYGETDYKEAESVTEMPTVTEETVAQTEANIVDDFQDYNYGTMETYQTESPRRVSGSNEPNPVEEGFTEEYLTGEDYDVQRNISEDILYGNKGIDGRDSDLLVDGDLGEYDFYEYKEYEERTTTSPNEEFGPGVPAETDFTETSINGHGAYGEKGQKGEPAVVEPGMLVEGPPGPAGPAGLMGPPGLQGPSGLPGDPGDRGPPGRPGLPGADGLPGPPGTMLMLPFRYGGDGSKGPTISAQEAQAQAILQQARIALRGPPGPMGLTGRPGPVGGPGSAGAKGESGDPGPQGPRGVQGPPGPTGKPGKRGRPGADGGRGMPGEPGSKGDRGFDGLPGLPGDKGHRGERGPQGPPGLPGDDGMRGEDGEIGPRGLPGEAGPRGLLGPRGTPGPPGQPGIGGIDGPQGPKGNMGPQGEPGPPGQQGNPGPQGLPGPQGPIGPPGEKGPQGKPGLAGLPGADGPPGHPGKEGQSGEKGALGPPGPQGPIGYPGPRGVKGADGVRGLKGSKGEKGEDGFPGFKGDMGLKGDRGEVGQVGPRGEDGPEGPKGRAGPTGDPGPSGQAGEKGKLGVPGLPGYPGRQGPKGSTGFPGFPGANGEKGARGIAGKPGPRGQRGPTGPRGSRGARGPTGKPGPKGTSGGDGPPGPPGERGPQGPQGPVGFPGPKGPPGPAGKDGLPGHPGQRGETGFQGKTGPPGPGGVVGPQGPTGETGPIGERGHPGTPGPPGEQGLPGAAGKEGAKGDPGPQGISGKDGPAGIRGFPGERGLPGAQGAPGLKGGEGPQGPQGPIGSPGERGSAGTAGPIGLPGRPGPQGPPGPAGEKGAPGEKGPQGPAGRDGVQGPVGLPGPAGPAGSPGEDGDKGEIGEPGQKGSKGDKGENGPPGPPGLQGPVGAPGIAGGDGEAGPRGQQGMFGQKGDEGARGFPGPPGPIGLQGLPGPPGEKGENGDVGPMGPPGPPGPRGPQGPNGADGPQGPPGSIGSVGGVGEKGEPGEAGNPGPPGEAGSGGPKGERGEKGEAGPPGAAGPPGIKGPPGDDGPKGNPGPVGFPGDPGPPGEPGPAGQDGVGGDKGEDGDPGQPGPPGPSGEAGPPGPPGKRGPPGASGSEGRQGEKGAKGEAGAEGPPGKTGPVGPQGPSGKPGPEGLRGIPGPVGEQGLPGAAGQDGPPGPLGPPGLPGLKGDPGSKGEKGHPGLIGLIGPPGEQGEKGDRGLPGTQGSPGAKGDGGIPGPAGPIGPPGPPGLPGPAGPKGNKGSSGPTGQKGDSGMPGPPGPPGPPGEVIQPLPILSPKKTRRHTESIQADAGDNILDYSDGMEEIFGSLNSLKQDIEHMKFPMGTQTNPARTCKDLQLSHPDFPDGEYWIDPNQGCSGDSFKVYCNFTAGGETCIYPDKKSEGVRLSSWPKEKPGSWYSEFKRGKLLSYLDVEGNSINMVQMTFLKLLTASARQNFTYNCHQSTAWYDVLSGSYDKALRFLGSNDEEMSYENNPHIKALYDGCASRKGYEKTVIEINTPKIDQVPIIDVMINDFGDQNQKFGFEVGPACFLG</sequence>
<organism>
    <name type="scientific">Rattus norvegicus</name>
    <name type="common">Rat</name>
    <dbReference type="NCBI Taxonomy" id="10116"/>
    <lineage>
        <taxon>Eukaryota</taxon>
        <taxon>Metazoa</taxon>
        <taxon>Chordata</taxon>
        <taxon>Craniata</taxon>
        <taxon>Vertebrata</taxon>
        <taxon>Euteleostomi</taxon>
        <taxon>Mammalia</taxon>
        <taxon>Eutheria</taxon>
        <taxon>Euarchontoglires</taxon>
        <taxon>Glires</taxon>
        <taxon>Rodentia</taxon>
        <taxon>Myomorpha</taxon>
        <taxon>Muroidea</taxon>
        <taxon>Muridae</taxon>
        <taxon>Murinae</taxon>
        <taxon>Rattus</taxon>
    </lineage>
</organism>
<keyword id="KW-0025">Alternative splicing</keyword>
<keyword id="KW-0106">Calcium</keyword>
<keyword id="KW-0176">Collagen</keyword>
<keyword id="KW-1015">Disulfide bond</keyword>
<keyword id="KW-0272">Extracellular matrix</keyword>
<keyword id="KW-0325">Glycoprotein</keyword>
<keyword id="KW-0379">Hydroxylation</keyword>
<keyword id="KW-0479">Metal-binding</keyword>
<keyword id="KW-1185">Reference proteome</keyword>
<keyword id="KW-0677">Repeat</keyword>
<keyword id="KW-0964">Secreted</keyword>
<keyword id="KW-0732">Signal</keyword>
<dbReference type="EMBL" id="AABR03012126">
    <property type="status" value="NOT_ANNOTATED_CDS"/>
    <property type="molecule type" value="Genomic_DNA"/>
</dbReference>
<dbReference type="EMBL" id="AABR03013126">
    <property type="status" value="NOT_ANNOTATED_CDS"/>
    <property type="molecule type" value="Genomic_DNA"/>
</dbReference>
<dbReference type="EMBL" id="AABR03014171">
    <property type="status" value="NOT_ANNOTATED_CDS"/>
    <property type="molecule type" value="Genomic_DNA"/>
</dbReference>
<dbReference type="EMBL" id="AABR03015382">
    <property type="status" value="NOT_ANNOTATED_CDS"/>
    <property type="molecule type" value="Genomic_DNA"/>
</dbReference>
<dbReference type="EMBL" id="AABR03015832">
    <property type="status" value="NOT_ANNOTATED_CDS"/>
    <property type="molecule type" value="Genomic_DNA"/>
</dbReference>
<dbReference type="EMBL" id="AABR03016562">
    <property type="status" value="NOT_ANNOTATED_CDS"/>
    <property type="molecule type" value="Genomic_DNA"/>
</dbReference>
<dbReference type="EMBL" id="AABR03017847">
    <property type="status" value="NOT_ANNOTATED_CDS"/>
    <property type="molecule type" value="Genomic_DNA"/>
</dbReference>
<dbReference type="EMBL" id="AABR03017951">
    <property type="status" value="NOT_ANNOTATED_CDS"/>
    <property type="molecule type" value="Genomic_DNA"/>
</dbReference>
<dbReference type="EMBL" id="AABR03018245">
    <property type="status" value="NOT_ANNOTATED_CDS"/>
    <property type="molecule type" value="Genomic_DNA"/>
</dbReference>
<dbReference type="EMBL" id="AABR03019675">
    <property type="status" value="NOT_ANNOTATED_CDS"/>
    <property type="molecule type" value="Genomic_DNA"/>
</dbReference>
<dbReference type="EMBL" id="AABR03023874">
    <property type="status" value="NOT_ANNOTATED_CDS"/>
    <property type="molecule type" value="Genomic_DNA"/>
</dbReference>
<dbReference type="EMBL" id="U20116">
    <property type="protein sequence ID" value="AAK83682.1"/>
    <property type="molecule type" value="Genomic_DNA"/>
</dbReference>
<dbReference type="EMBL" id="U20118">
    <property type="protein sequence ID" value="AAK83568.2"/>
    <property type="molecule type" value="Genomic_DNA"/>
</dbReference>
<dbReference type="EMBL" id="U20118">
    <property type="protein sequence ID" value="AAK83569.2"/>
    <property type="molecule type" value="Genomic_DNA"/>
</dbReference>
<dbReference type="EMBL" id="U20118">
    <property type="protein sequence ID" value="AAK83570.2"/>
    <property type="molecule type" value="Genomic_DNA"/>
</dbReference>
<dbReference type="EMBL" id="U20118">
    <property type="protein sequence ID" value="AAK83571.2"/>
    <property type="molecule type" value="Genomic_DNA"/>
</dbReference>
<dbReference type="EMBL" id="U20118">
    <property type="protein sequence ID" value="AAA92358.3"/>
    <property type="molecule type" value="Genomic_DNA"/>
</dbReference>
<dbReference type="EMBL" id="U20118">
    <property type="protein sequence ID" value="AAA92359.3"/>
    <property type="molecule type" value="Genomic_DNA"/>
</dbReference>
<dbReference type="EMBL" id="U20121">
    <property type="protein sequence ID" value="AAA92360.1"/>
    <property type="molecule type" value="mRNA"/>
</dbReference>
<dbReference type="PIR" id="B31795">
    <property type="entry name" value="B31795"/>
</dbReference>
<dbReference type="RefSeq" id="NP_037249.1">
    <molecule id="P20909-1"/>
    <property type="nucleotide sequence ID" value="NM_013117.1"/>
</dbReference>
<dbReference type="RefSeq" id="XP_006233272.1">
    <molecule id="P20909-2"/>
    <property type="nucleotide sequence ID" value="XM_006233210.5"/>
</dbReference>
<dbReference type="SMR" id="P20909"/>
<dbReference type="BioGRID" id="247683">
    <property type="interactions" value="1"/>
</dbReference>
<dbReference type="FunCoup" id="P20909">
    <property type="interactions" value="357"/>
</dbReference>
<dbReference type="IntAct" id="P20909">
    <property type="interactions" value="33"/>
</dbReference>
<dbReference type="STRING" id="10116.ENSRNOP00000061595"/>
<dbReference type="CarbonylDB" id="P20909"/>
<dbReference type="GlyCosmos" id="P20909">
    <property type="glycosylation" value="3 sites, No reported glycans"/>
</dbReference>
<dbReference type="GlyGen" id="P20909">
    <property type="glycosylation" value="6 sites"/>
</dbReference>
<dbReference type="iPTMnet" id="P20909"/>
<dbReference type="PhosphoSitePlus" id="P20909"/>
<dbReference type="PaxDb" id="10116-ENSRNOP00000023794"/>
<dbReference type="ABCD" id="P20909">
    <property type="antibodies" value="1 sequenced antibody"/>
</dbReference>
<dbReference type="Ensembl" id="ENSRNOT00000068413.4">
    <molecule id="P20909-1"/>
    <property type="protein sequence ID" value="ENSRNOP00000061595.1"/>
    <property type="gene ID" value="ENSRNOG00000023148.8"/>
</dbReference>
<dbReference type="GeneID" id="25654"/>
<dbReference type="KEGG" id="rno:25654"/>
<dbReference type="UCSC" id="RGD:2372">
    <molecule id="P20909-1"/>
    <property type="organism name" value="rat"/>
</dbReference>
<dbReference type="AGR" id="RGD:2372"/>
<dbReference type="CTD" id="1301"/>
<dbReference type="RGD" id="2372">
    <property type="gene designation" value="Col11a1"/>
</dbReference>
<dbReference type="eggNOG" id="KOG3544">
    <property type="taxonomic scope" value="Eukaryota"/>
</dbReference>
<dbReference type="GeneTree" id="ENSGT00940000154535"/>
<dbReference type="HOGENOM" id="CLU_001074_2_1_1"/>
<dbReference type="InParanoid" id="P20909"/>
<dbReference type="OMA" id="KGNMQGP"/>
<dbReference type="OrthoDB" id="8939548at2759"/>
<dbReference type="TreeFam" id="TF323987"/>
<dbReference type="Reactome" id="R-RNO-1442490">
    <property type="pathway name" value="Collagen degradation"/>
</dbReference>
<dbReference type="Reactome" id="R-RNO-1650814">
    <property type="pathway name" value="Collagen biosynthesis and modifying enzymes"/>
</dbReference>
<dbReference type="Reactome" id="R-RNO-2022090">
    <property type="pathway name" value="Assembly of collagen fibrils and other multimeric structures"/>
</dbReference>
<dbReference type="Reactome" id="R-RNO-3000171">
    <property type="pathway name" value="Non-integrin membrane-ECM interactions"/>
</dbReference>
<dbReference type="Reactome" id="R-RNO-8874081">
    <property type="pathway name" value="MET activates PTK2 signaling"/>
</dbReference>
<dbReference type="Reactome" id="R-RNO-8948216">
    <property type="pathway name" value="Collagen chain trimerization"/>
</dbReference>
<dbReference type="PRO" id="PR:P20909"/>
<dbReference type="Proteomes" id="UP000002494">
    <property type="component" value="Chromosome 2"/>
</dbReference>
<dbReference type="Bgee" id="ENSRNOG00000023148">
    <property type="expression patterns" value="Expressed in ovary and 12 other cell types or tissues"/>
</dbReference>
<dbReference type="GO" id="GO:0005581">
    <property type="term" value="C:collagen trimer"/>
    <property type="evidence" value="ECO:0000266"/>
    <property type="project" value="RGD"/>
</dbReference>
<dbReference type="GO" id="GO:0005592">
    <property type="term" value="C:collagen type XI trimer"/>
    <property type="evidence" value="ECO:0000266"/>
    <property type="project" value="RGD"/>
</dbReference>
<dbReference type="GO" id="GO:0062023">
    <property type="term" value="C:collagen-containing extracellular matrix"/>
    <property type="evidence" value="ECO:0000318"/>
    <property type="project" value="GO_Central"/>
</dbReference>
<dbReference type="GO" id="GO:0031012">
    <property type="term" value="C:extracellular matrix"/>
    <property type="evidence" value="ECO:0000266"/>
    <property type="project" value="RGD"/>
</dbReference>
<dbReference type="GO" id="GO:0005615">
    <property type="term" value="C:extracellular space"/>
    <property type="evidence" value="ECO:0000318"/>
    <property type="project" value="GO_Central"/>
</dbReference>
<dbReference type="GO" id="GO:0005201">
    <property type="term" value="F:extracellular matrix structural constituent"/>
    <property type="evidence" value="ECO:0000304"/>
    <property type="project" value="RGD"/>
</dbReference>
<dbReference type="GO" id="GO:0030020">
    <property type="term" value="F:extracellular matrix structural constituent conferring tensile strength"/>
    <property type="evidence" value="ECO:0000318"/>
    <property type="project" value="GO_Central"/>
</dbReference>
<dbReference type="GO" id="GO:1904399">
    <property type="term" value="F:heparan sulfate binding"/>
    <property type="evidence" value="ECO:0000314"/>
    <property type="project" value="RGD"/>
</dbReference>
<dbReference type="GO" id="GO:0008201">
    <property type="term" value="F:heparin binding"/>
    <property type="evidence" value="ECO:0000314"/>
    <property type="project" value="RGD"/>
</dbReference>
<dbReference type="GO" id="GO:0046872">
    <property type="term" value="F:metal ion binding"/>
    <property type="evidence" value="ECO:0007669"/>
    <property type="project" value="UniProtKB-KW"/>
</dbReference>
<dbReference type="GO" id="GO:0001502">
    <property type="term" value="P:cartilage condensation"/>
    <property type="evidence" value="ECO:0000266"/>
    <property type="project" value="RGD"/>
</dbReference>
<dbReference type="GO" id="GO:0051216">
    <property type="term" value="P:cartilage development"/>
    <property type="evidence" value="ECO:0000266"/>
    <property type="project" value="RGD"/>
</dbReference>
<dbReference type="GO" id="GO:0002063">
    <property type="term" value="P:chondrocyte development"/>
    <property type="evidence" value="ECO:0000266"/>
    <property type="project" value="RGD"/>
</dbReference>
<dbReference type="GO" id="GO:0030199">
    <property type="term" value="P:collagen fibril organization"/>
    <property type="evidence" value="ECO:0000266"/>
    <property type="project" value="RGD"/>
</dbReference>
<dbReference type="GO" id="GO:0050910">
    <property type="term" value="P:detection of mechanical stimulus involved in sensory perception of sound"/>
    <property type="evidence" value="ECO:0000266"/>
    <property type="project" value="RGD"/>
</dbReference>
<dbReference type="GO" id="GO:0048704">
    <property type="term" value="P:embryonic skeletal system morphogenesis"/>
    <property type="evidence" value="ECO:0000266"/>
    <property type="project" value="RGD"/>
</dbReference>
<dbReference type="GO" id="GO:0035987">
    <property type="term" value="P:endodermal cell differentiation"/>
    <property type="evidence" value="ECO:0000266"/>
    <property type="project" value="RGD"/>
</dbReference>
<dbReference type="GO" id="GO:0003007">
    <property type="term" value="P:heart morphogenesis"/>
    <property type="evidence" value="ECO:0000266"/>
    <property type="project" value="RGD"/>
</dbReference>
<dbReference type="GO" id="GO:0042472">
    <property type="term" value="P:inner ear morphogenesis"/>
    <property type="evidence" value="ECO:0000266"/>
    <property type="project" value="RGD"/>
</dbReference>
<dbReference type="GO" id="GO:0001503">
    <property type="term" value="P:ossification"/>
    <property type="evidence" value="ECO:0000270"/>
    <property type="project" value="RGD"/>
</dbReference>
<dbReference type="GO" id="GO:0006029">
    <property type="term" value="P:proteoglycan metabolic process"/>
    <property type="evidence" value="ECO:0000266"/>
    <property type="project" value="RGD"/>
</dbReference>
<dbReference type="GO" id="GO:0007605">
    <property type="term" value="P:sensory perception of sound"/>
    <property type="evidence" value="ECO:0000266"/>
    <property type="project" value="RGD"/>
</dbReference>
<dbReference type="GO" id="GO:0048705">
    <property type="term" value="P:skeletal system morphogenesis"/>
    <property type="evidence" value="ECO:0000266"/>
    <property type="project" value="RGD"/>
</dbReference>
<dbReference type="GO" id="GO:0035989">
    <property type="term" value="P:tendon development"/>
    <property type="evidence" value="ECO:0000266"/>
    <property type="project" value="RGD"/>
</dbReference>
<dbReference type="GO" id="GO:0055010">
    <property type="term" value="P:ventricular cardiac muscle tissue morphogenesis"/>
    <property type="evidence" value="ECO:0000266"/>
    <property type="project" value="RGD"/>
</dbReference>
<dbReference type="GO" id="GO:0007601">
    <property type="term" value="P:visual perception"/>
    <property type="evidence" value="ECO:0000266"/>
    <property type="project" value="RGD"/>
</dbReference>
<dbReference type="CDD" id="cd00110">
    <property type="entry name" value="LamG"/>
    <property type="match status" value="1"/>
</dbReference>
<dbReference type="FunFam" id="2.60.120.1000:FF:000002">
    <property type="entry name" value="Collagen XI alpha 1 chain"/>
    <property type="match status" value="1"/>
</dbReference>
<dbReference type="FunFam" id="2.60.120.200:FF:000016">
    <property type="entry name" value="Collagen XI alpha 1 chain"/>
    <property type="match status" value="1"/>
</dbReference>
<dbReference type="Gene3D" id="2.60.120.1000">
    <property type="match status" value="1"/>
</dbReference>
<dbReference type="Gene3D" id="2.60.120.200">
    <property type="match status" value="1"/>
</dbReference>
<dbReference type="InterPro" id="IPR008160">
    <property type="entry name" value="Collagen"/>
</dbReference>
<dbReference type="InterPro" id="IPR050149">
    <property type="entry name" value="Collagen_superfamily"/>
</dbReference>
<dbReference type="InterPro" id="IPR013320">
    <property type="entry name" value="ConA-like_dom_sf"/>
</dbReference>
<dbReference type="InterPro" id="IPR000885">
    <property type="entry name" value="Fib_collagen_C"/>
</dbReference>
<dbReference type="InterPro" id="IPR001791">
    <property type="entry name" value="Laminin_G"/>
</dbReference>
<dbReference type="InterPro" id="IPR048287">
    <property type="entry name" value="TSPN-like_N"/>
</dbReference>
<dbReference type="PANTHER" id="PTHR24023">
    <property type="entry name" value="COLLAGEN ALPHA"/>
    <property type="match status" value="1"/>
</dbReference>
<dbReference type="PANTHER" id="PTHR24023:SF1082">
    <property type="entry name" value="COLLAGEN TRIPLE HELIX REPEAT"/>
    <property type="match status" value="1"/>
</dbReference>
<dbReference type="Pfam" id="PF01410">
    <property type="entry name" value="COLFI"/>
    <property type="match status" value="1"/>
</dbReference>
<dbReference type="Pfam" id="PF01391">
    <property type="entry name" value="Collagen"/>
    <property type="match status" value="8"/>
</dbReference>
<dbReference type="Pfam" id="PF02210">
    <property type="entry name" value="Laminin_G_2"/>
    <property type="match status" value="1"/>
</dbReference>
<dbReference type="SMART" id="SM00038">
    <property type="entry name" value="COLFI"/>
    <property type="match status" value="1"/>
</dbReference>
<dbReference type="SMART" id="SM00282">
    <property type="entry name" value="LamG"/>
    <property type="match status" value="1"/>
</dbReference>
<dbReference type="SMART" id="SM00210">
    <property type="entry name" value="TSPN"/>
    <property type="match status" value="1"/>
</dbReference>
<dbReference type="SUPFAM" id="SSF49899">
    <property type="entry name" value="Concanavalin A-like lectins/glucanases"/>
    <property type="match status" value="1"/>
</dbReference>
<dbReference type="PROSITE" id="PS51461">
    <property type="entry name" value="NC1_FIB"/>
    <property type="match status" value="1"/>
</dbReference>
<feature type="signal peptide" evidence="2">
    <location>
        <begin position="1"/>
        <end position="34"/>
    </location>
</feature>
<feature type="propeptide" id="PRO_0000415946" description="N-terminal propeptide" evidence="2">
    <location>
        <begin position="35"/>
        <end position="511"/>
    </location>
</feature>
<feature type="chain" id="PRO_0000005780" description="Collagen alpha-1(XI) chain">
    <location>
        <begin position="512"/>
        <end position="1561"/>
    </location>
</feature>
<feature type="propeptide" id="PRO_0000005781" description="C-terminal propeptide">
    <location>
        <begin position="1562"/>
        <end position="1804"/>
    </location>
</feature>
<feature type="domain" description="Laminin G-like">
    <location>
        <begin position="70"/>
        <end position="242"/>
    </location>
</feature>
<feature type="domain" description="Collagen-like 1">
    <location>
        <begin position="440"/>
        <end position="488"/>
    </location>
</feature>
<feature type="domain" description="Collagen-like 2">
    <location>
        <begin position="530"/>
        <end position="584"/>
    </location>
</feature>
<feature type="domain" description="Collagen-like 3">
    <location>
        <begin position="581"/>
        <end position="639"/>
    </location>
</feature>
<feature type="domain" description="Collagen-like 4">
    <location>
        <begin position="607"/>
        <end position="664"/>
    </location>
</feature>
<feature type="domain" description="Collagen-like 5">
    <location>
        <begin position="641"/>
        <end position="698"/>
    </location>
</feature>
<feature type="domain" description="Collagen-like 6">
    <location>
        <begin position="746"/>
        <end position="804"/>
    </location>
</feature>
<feature type="domain" description="Collagen-like 7">
    <location>
        <begin position="1391"/>
        <end position="1449"/>
    </location>
</feature>
<feature type="domain" description="Collagen-like 8">
    <location>
        <begin position="1442"/>
        <end position="1492"/>
    </location>
</feature>
<feature type="domain" description="Collagen-like 9">
    <location>
        <begin position="1481"/>
        <end position="1539"/>
    </location>
</feature>
<feature type="domain" description="Fibrillar collagen NC1" evidence="3">
    <location>
        <begin position="1575"/>
        <end position="1803"/>
    </location>
</feature>
<feature type="region of interest" description="Nonhelical region">
    <location>
        <begin position="229"/>
        <end position="417"/>
    </location>
</feature>
<feature type="region of interest" description="Triple-helical region (interrupted)">
    <location>
        <begin position="418"/>
        <end position="506"/>
    </location>
</feature>
<feature type="region of interest" description="Disordered" evidence="4">
    <location>
        <begin position="437"/>
        <end position="506"/>
    </location>
</feature>
<feature type="region of interest" description="Short nonhelical segment">
    <location>
        <begin position="507"/>
        <end position="509"/>
    </location>
</feature>
<feature type="region of interest" description="Telopeptide">
    <location>
        <begin position="510"/>
        <end position="527"/>
    </location>
</feature>
<feature type="region of interest" description="Disordered" evidence="4">
    <location>
        <begin position="526"/>
        <end position="1560"/>
    </location>
</feature>
<feature type="region of interest" description="Triple-helical region">
    <location>
        <begin position="528"/>
        <end position="1540"/>
    </location>
</feature>
<feature type="region of interest" description="Nonhelical region (C-terminal)">
    <location>
        <begin position="1541"/>
        <end position="1561"/>
    </location>
</feature>
<feature type="compositionally biased region" description="Low complexity" evidence="4">
    <location>
        <begin position="447"/>
        <end position="465"/>
    </location>
</feature>
<feature type="compositionally biased region" description="Low complexity" evidence="4">
    <location>
        <begin position="477"/>
        <end position="494"/>
    </location>
</feature>
<feature type="compositionally biased region" description="Gly residues" evidence="4">
    <location>
        <begin position="539"/>
        <end position="548"/>
    </location>
</feature>
<feature type="compositionally biased region" description="Gly residues" evidence="4">
    <location>
        <begin position="581"/>
        <end position="590"/>
    </location>
</feature>
<feature type="compositionally biased region" description="Low complexity" evidence="4">
    <location>
        <begin position="639"/>
        <end position="655"/>
    </location>
</feature>
<feature type="compositionally biased region" description="Pro residues" evidence="4">
    <location>
        <begin position="697"/>
        <end position="708"/>
    </location>
</feature>
<feature type="compositionally biased region" description="Low complexity" evidence="4">
    <location>
        <begin position="715"/>
        <end position="726"/>
    </location>
</feature>
<feature type="compositionally biased region" description="Basic and acidic residues" evidence="4">
    <location>
        <begin position="805"/>
        <end position="814"/>
    </location>
</feature>
<feature type="compositionally biased region" description="Low complexity" evidence="4">
    <location>
        <begin position="873"/>
        <end position="901"/>
    </location>
</feature>
<feature type="compositionally biased region" description="Low complexity" evidence="4">
    <location>
        <begin position="916"/>
        <end position="925"/>
    </location>
</feature>
<feature type="compositionally biased region" description="Low complexity" evidence="4">
    <location>
        <begin position="969"/>
        <end position="979"/>
    </location>
</feature>
<feature type="compositionally biased region" description="Gly residues" evidence="4">
    <location>
        <begin position="1040"/>
        <end position="1049"/>
    </location>
</feature>
<feature type="compositionally biased region" description="Pro residues" evidence="4">
    <location>
        <begin position="1074"/>
        <end position="1083"/>
    </location>
</feature>
<feature type="compositionally biased region" description="Low complexity" evidence="4">
    <location>
        <begin position="1084"/>
        <end position="1108"/>
    </location>
</feature>
<feature type="compositionally biased region" description="Gly residues" evidence="4">
    <location>
        <begin position="1160"/>
        <end position="1169"/>
    </location>
</feature>
<feature type="compositionally biased region" description="Pro residues" evidence="4">
    <location>
        <begin position="1216"/>
        <end position="1227"/>
    </location>
</feature>
<feature type="compositionally biased region" description="Pro residues" evidence="4">
    <location>
        <begin position="1341"/>
        <end position="1360"/>
    </location>
</feature>
<feature type="compositionally biased region" description="Low complexity" evidence="4">
    <location>
        <begin position="1383"/>
        <end position="1392"/>
    </location>
</feature>
<feature type="compositionally biased region" description="Low complexity" evidence="4">
    <location>
        <begin position="1417"/>
        <end position="1426"/>
    </location>
</feature>
<feature type="compositionally biased region" description="Pro residues" evidence="4">
    <location>
        <begin position="1428"/>
        <end position="1437"/>
    </location>
</feature>
<feature type="compositionally biased region" description="Low complexity" evidence="4">
    <location>
        <begin position="1453"/>
        <end position="1462"/>
    </location>
</feature>
<feature type="compositionally biased region" description="Gly residues" evidence="4">
    <location>
        <begin position="1481"/>
        <end position="1490"/>
    </location>
</feature>
<feature type="compositionally biased region" description="Pro residues" evidence="4">
    <location>
        <begin position="1491"/>
        <end position="1507"/>
    </location>
</feature>
<feature type="compositionally biased region" description="Low complexity" evidence="4">
    <location>
        <begin position="1509"/>
        <end position="1519"/>
    </location>
</feature>
<feature type="compositionally biased region" description="Pro residues" evidence="4">
    <location>
        <begin position="1528"/>
        <end position="1537"/>
    </location>
</feature>
<feature type="binding site" evidence="1">
    <location>
        <position position="1623"/>
    </location>
    <ligand>
        <name>Ca(2+)</name>
        <dbReference type="ChEBI" id="CHEBI:29108"/>
    </ligand>
</feature>
<feature type="binding site" evidence="1">
    <location>
        <position position="1625"/>
    </location>
    <ligand>
        <name>Ca(2+)</name>
        <dbReference type="ChEBI" id="CHEBI:29108"/>
    </ligand>
</feature>
<feature type="binding site" evidence="1">
    <location>
        <position position="1626"/>
    </location>
    <ligand>
        <name>Ca(2+)</name>
        <dbReference type="ChEBI" id="CHEBI:29108"/>
    </ligand>
</feature>
<feature type="binding site" evidence="1">
    <location>
        <position position="1628"/>
    </location>
    <ligand>
        <name>Ca(2+)</name>
        <dbReference type="ChEBI" id="CHEBI:29108"/>
    </ligand>
</feature>
<feature type="binding site" evidence="1">
    <location>
        <position position="1631"/>
    </location>
    <ligand>
        <name>Ca(2+)</name>
        <dbReference type="ChEBI" id="CHEBI:29108"/>
    </ligand>
</feature>
<feature type="modified residue" description="Allysine" evidence="1">
    <location>
        <position position="610"/>
    </location>
</feature>
<feature type="modified residue" description="Allysine" evidence="1">
    <location>
        <position position="1450"/>
    </location>
</feature>
<feature type="glycosylation site" description="N-linked (GlcNAc...) asparagine" evidence="2">
    <location>
        <position position="351"/>
    </location>
</feature>
<feature type="glycosylation site" description="N-linked (GlcNAc...) asparagine" evidence="2">
    <location>
        <position position="1638"/>
    </location>
</feature>
<feature type="glycosylation site" description="N-linked (GlcNAc...) asparagine" evidence="2">
    <location>
        <position position="1707"/>
    </location>
</feature>
<feature type="disulfide bond" evidence="3 5">
    <location>
        <begin position="60"/>
        <end position="242"/>
    </location>
</feature>
<feature type="disulfide bond" evidence="3 5">
    <location>
        <begin position="181"/>
        <end position="235"/>
    </location>
</feature>
<feature type="disulfide bond" evidence="3">
    <location>
        <begin position="1605"/>
        <end position="1637"/>
    </location>
</feature>
<feature type="disulfide bond" description="Interchain" evidence="3">
    <location>
        <position position="1628"/>
    </location>
</feature>
<feature type="disulfide bond" evidence="3">
    <location>
        <begin position="1646"/>
        <end position="1801"/>
    </location>
</feature>
<feature type="disulfide bond" evidence="3">
    <location>
        <begin position="1712"/>
        <end position="1755"/>
    </location>
</feature>
<feature type="splice variant" id="VSP_042438" description="In isoform 2 and isoform 5." evidence="6">
    <original>YAPEDIIEYDYEYGETDYKEAESVTEMPTVTEETVAQTE</original>
    <variation>KKKSNYTKKKRTLATNSKKKSKMSTTPKSEKFASKKKKRNQATAKAKLGVQ</variation>
    <location>
        <begin position="259"/>
        <end position="297"/>
    </location>
</feature>
<feature type="splice variant" id="VSP_042439" description="In isoform 3 and isoform 6." evidence="7">
    <location>
        <begin position="259"/>
        <end position="297"/>
    </location>
</feature>
<feature type="splice variant" id="VSP_042440" description="In isoform 4, isoform 5 and isoform 6." evidence="7">
    <location>
        <begin position="329"/>
        <end position="413"/>
    </location>
</feature>
<feature type="sequence conflict" description="In Ref. 2; AAA92358/AAA92359/AAA92360/AAK83570." evidence="7" ref="2">
    <original>S</original>
    <variation>A</variation>
    <location>
        <position position="394"/>
    </location>
</feature>
<feature type="sequence conflict" description="In Ref. 3; no nucleotide entry." evidence="7" ref="3">
    <original>R</original>
    <variation>G</variation>
    <location>
        <position position="1371"/>
    </location>
</feature>
<feature type="sequence conflict" description="In Ref. 3; no nucleotide entry." evidence="7" ref="3">
    <original>A</original>
    <variation>S</variation>
    <location>
        <position position="1702"/>
    </location>
</feature>
<feature type="sequence conflict" description="In Ref. 3; no nucleotide entry." evidence="7" ref="3">
    <original>E</original>
    <variation>D</variation>
    <location>
        <position position="1743"/>
    </location>
</feature>
<evidence type="ECO:0000250" key="1"/>
<evidence type="ECO:0000255" key="2"/>
<evidence type="ECO:0000255" key="3">
    <source>
        <dbReference type="PROSITE-ProRule" id="PRU00793"/>
    </source>
</evidence>
<evidence type="ECO:0000256" key="4">
    <source>
        <dbReference type="SAM" id="MobiDB-lite"/>
    </source>
</evidence>
<evidence type="ECO:0000269" key="5">
    <source>
    </source>
</evidence>
<evidence type="ECO:0000303" key="6">
    <source>
    </source>
</evidence>
<evidence type="ECO:0000305" key="7"/>
<accession>P20909</accession>
<accession>F1LSI4</accession>
<accession>Q62750</accession>
<accession>Q63391</accession>
<accession>Q63392</accession>
<accession>Q63393</accession>
<accession>Q8VBY8</accession>
<accession>Q920Z7</accession>
<accession>Q920Z8</accession>
<accession>Q920Z9</accession>
<accession>Q921A0</accession>
<accession>Q921A1</accession>
<protein>
    <recommendedName>
        <fullName>Collagen alpha-1(XI) chain</fullName>
    </recommendedName>
</protein>
<gene>
    <name type="primary">Col11a1</name>
</gene>
<name>COBA1_RAT</name>
<proteinExistence type="evidence at protein level"/>
<comment type="function">
    <text>May play an important role in fibrillogenesis by controlling lateral growth of collagen II fibrils.</text>
</comment>
<comment type="subunit">
    <text>Trimers composed of three different chains: alpha 1(XI), alpha 2(XI), and alpha 3(XI). Alpha 3(XI) is probably a post-translational modification of alpha 1(II).</text>
</comment>
<comment type="subcellular location">
    <subcellularLocation>
        <location evidence="3">Secreted</location>
        <location evidence="3">Extracellular space</location>
        <location evidence="3">Extracellular matrix</location>
    </subcellularLocation>
</comment>
<comment type="alternative products">
    <event type="alternative splicing"/>
    <isoform>
        <id>P20909-1</id>
        <name>1</name>
        <name>+V1a+V2</name>
        <name>p6A+8</name>
        <sequence type="displayed"/>
    </isoform>
    <isoform>
        <id>P20909-2</id>
        <name>2</name>
        <name>+V1b+V2</name>
        <name>p6B+8</name>
        <sequence type="described" ref="VSP_042438"/>
    </isoform>
    <isoform>
        <id>P20909-3</id>
        <name>3</name>
        <name>+V2</name>
        <name>p8</name>
        <sequence type="described" ref="VSP_042439"/>
    </isoform>
    <isoform>
        <id>P20909-4</id>
        <name>4</name>
        <name>+V1a</name>
        <name>p6A</name>
        <sequence type="described" ref="VSP_042440"/>
    </isoform>
    <isoform>
        <id>P20909-5</id>
        <name>5</name>
        <name>+V1b</name>
        <name>p6B</name>
        <sequence type="described" ref="VSP_042438 VSP_042440"/>
    </isoform>
    <isoform>
        <id>P20909-6</id>
        <name>6</name>
        <name>-V1-V2</name>
        <name>p0</name>
        <sequence type="described" ref="VSP_042439 VSP_042440"/>
    </isoform>
</comment>
<comment type="domain">
    <text evidence="1">The C-terminal propeptide, also known as COLFI domain, have crucial roles in tissue growth and repair by controlling both the intracellular assembly of procollagen molecules and the extracellular assembly of collagen fibrils. It binds a calcium ion which is essential for its function (By similarity).</text>
</comment>
<comment type="PTM">
    <text>Prolines at the third position of the tripeptide repeating unit (G-X-Y) are hydroxylated in some or all of the chains.</text>
</comment>
<comment type="PTM">
    <text evidence="5">N-glycosylated.</text>
</comment>
<comment type="similarity">
    <text evidence="3">Belongs to the fibrillar collagen family.</text>
</comment>